<name>YBEY_GEOSW</name>
<accession>C5D4S8</accession>
<sequence length="156" mass="17876">MILNIDFIDETNEVTKEQMNIIEQLLNYAAEIEHVPSGAEVGISFVDNERIRIINRDYRGKDQPTDVISFALEEKGEGEVEIVDADIPPLLGDIIISIPKAKEQAKEYGHSFMRELGFLAVHGFLHLLGYDHKTEEEEKIMFSKQKDILERYGLTR</sequence>
<proteinExistence type="inferred from homology"/>
<dbReference type="EC" id="3.1.-.-" evidence="1"/>
<dbReference type="EMBL" id="CP001638">
    <property type="protein sequence ID" value="ACS25120.1"/>
    <property type="molecule type" value="Genomic_DNA"/>
</dbReference>
<dbReference type="SMR" id="C5D4S8"/>
<dbReference type="STRING" id="471223.GWCH70_2424"/>
<dbReference type="KEGG" id="gwc:GWCH70_2424"/>
<dbReference type="eggNOG" id="COG0319">
    <property type="taxonomic scope" value="Bacteria"/>
</dbReference>
<dbReference type="HOGENOM" id="CLU_106710_3_0_9"/>
<dbReference type="OrthoDB" id="9807740at2"/>
<dbReference type="GO" id="GO:0005737">
    <property type="term" value="C:cytoplasm"/>
    <property type="evidence" value="ECO:0007669"/>
    <property type="project" value="UniProtKB-SubCell"/>
</dbReference>
<dbReference type="GO" id="GO:0004222">
    <property type="term" value="F:metalloendopeptidase activity"/>
    <property type="evidence" value="ECO:0007669"/>
    <property type="project" value="InterPro"/>
</dbReference>
<dbReference type="GO" id="GO:0004521">
    <property type="term" value="F:RNA endonuclease activity"/>
    <property type="evidence" value="ECO:0007669"/>
    <property type="project" value="UniProtKB-UniRule"/>
</dbReference>
<dbReference type="GO" id="GO:0008270">
    <property type="term" value="F:zinc ion binding"/>
    <property type="evidence" value="ECO:0007669"/>
    <property type="project" value="UniProtKB-UniRule"/>
</dbReference>
<dbReference type="GO" id="GO:0006364">
    <property type="term" value="P:rRNA processing"/>
    <property type="evidence" value="ECO:0007669"/>
    <property type="project" value="UniProtKB-UniRule"/>
</dbReference>
<dbReference type="Gene3D" id="3.40.390.30">
    <property type="entry name" value="Metalloproteases ('zincins'), catalytic domain"/>
    <property type="match status" value="1"/>
</dbReference>
<dbReference type="HAMAP" id="MF_00009">
    <property type="entry name" value="Endoribonucl_YbeY"/>
    <property type="match status" value="1"/>
</dbReference>
<dbReference type="InterPro" id="IPR023091">
    <property type="entry name" value="MetalPrtase_cat_dom_sf_prd"/>
</dbReference>
<dbReference type="InterPro" id="IPR002036">
    <property type="entry name" value="YbeY"/>
</dbReference>
<dbReference type="InterPro" id="IPR020549">
    <property type="entry name" value="YbeY_CS"/>
</dbReference>
<dbReference type="NCBIfam" id="TIGR00043">
    <property type="entry name" value="rRNA maturation RNase YbeY"/>
    <property type="match status" value="1"/>
</dbReference>
<dbReference type="PANTHER" id="PTHR46986">
    <property type="entry name" value="ENDORIBONUCLEASE YBEY, CHLOROPLASTIC"/>
    <property type="match status" value="1"/>
</dbReference>
<dbReference type="PANTHER" id="PTHR46986:SF1">
    <property type="entry name" value="ENDORIBONUCLEASE YBEY, CHLOROPLASTIC"/>
    <property type="match status" value="1"/>
</dbReference>
<dbReference type="Pfam" id="PF02130">
    <property type="entry name" value="YbeY"/>
    <property type="match status" value="1"/>
</dbReference>
<dbReference type="SUPFAM" id="SSF55486">
    <property type="entry name" value="Metalloproteases ('zincins'), catalytic domain"/>
    <property type="match status" value="1"/>
</dbReference>
<dbReference type="PROSITE" id="PS01306">
    <property type="entry name" value="UPF0054"/>
    <property type="match status" value="1"/>
</dbReference>
<feature type="chain" id="PRO_1000201737" description="Endoribonuclease YbeY">
    <location>
        <begin position="1"/>
        <end position="156"/>
    </location>
</feature>
<feature type="binding site" evidence="1">
    <location>
        <position position="122"/>
    </location>
    <ligand>
        <name>Zn(2+)</name>
        <dbReference type="ChEBI" id="CHEBI:29105"/>
        <note>catalytic</note>
    </ligand>
</feature>
<feature type="binding site" evidence="1">
    <location>
        <position position="126"/>
    </location>
    <ligand>
        <name>Zn(2+)</name>
        <dbReference type="ChEBI" id="CHEBI:29105"/>
        <note>catalytic</note>
    </ligand>
</feature>
<feature type="binding site" evidence="1">
    <location>
        <position position="132"/>
    </location>
    <ligand>
        <name>Zn(2+)</name>
        <dbReference type="ChEBI" id="CHEBI:29105"/>
        <note>catalytic</note>
    </ligand>
</feature>
<comment type="function">
    <text evidence="1">Single strand-specific metallo-endoribonuclease involved in late-stage 70S ribosome quality control and in maturation of the 3' terminus of the 16S rRNA.</text>
</comment>
<comment type="cofactor">
    <cofactor evidence="1">
        <name>Zn(2+)</name>
        <dbReference type="ChEBI" id="CHEBI:29105"/>
    </cofactor>
    <text evidence="1">Binds 1 zinc ion.</text>
</comment>
<comment type="subcellular location">
    <subcellularLocation>
        <location evidence="1">Cytoplasm</location>
    </subcellularLocation>
</comment>
<comment type="similarity">
    <text evidence="1">Belongs to the endoribonuclease YbeY family.</text>
</comment>
<gene>
    <name evidence="1" type="primary">ybeY</name>
    <name type="ordered locus">GWCH70_2424</name>
</gene>
<protein>
    <recommendedName>
        <fullName evidence="1">Endoribonuclease YbeY</fullName>
        <ecNumber evidence="1">3.1.-.-</ecNumber>
    </recommendedName>
</protein>
<evidence type="ECO:0000255" key="1">
    <source>
        <dbReference type="HAMAP-Rule" id="MF_00009"/>
    </source>
</evidence>
<organism>
    <name type="scientific">Geobacillus sp. (strain WCH70)</name>
    <dbReference type="NCBI Taxonomy" id="471223"/>
    <lineage>
        <taxon>Bacteria</taxon>
        <taxon>Bacillati</taxon>
        <taxon>Bacillota</taxon>
        <taxon>Bacilli</taxon>
        <taxon>Bacillales</taxon>
        <taxon>Anoxybacillaceae</taxon>
        <taxon>Geobacillus</taxon>
    </lineage>
</organism>
<reference key="1">
    <citation type="submission" date="2009-06" db="EMBL/GenBank/DDBJ databases">
        <title>Complete sequence of chromosome of Geopacillus sp. WCH70.</title>
        <authorList>
            <consortium name="US DOE Joint Genome Institute"/>
            <person name="Lucas S."/>
            <person name="Copeland A."/>
            <person name="Lapidus A."/>
            <person name="Glavina del Rio T."/>
            <person name="Dalin E."/>
            <person name="Tice H."/>
            <person name="Bruce D."/>
            <person name="Goodwin L."/>
            <person name="Pitluck S."/>
            <person name="Chertkov O."/>
            <person name="Brettin T."/>
            <person name="Detter J.C."/>
            <person name="Han C."/>
            <person name="Larimer F."/>
            <person name="Land M."/>
            <person name="Hauser L."/>
            <person name="Kyrpides N."/>
            <person name="Mikhailova N."/>
            <person name="Brumm P."/>
            <person name="Mead D.A."/>
            <person name="Richardson P."/>
        </authorList>
    </citation>
    <scope>NUCLEOTIDE SEQUENCE [LARGE SCALE GENOMIC DNA]</scope>
    <source>
        <strain>WCH70</strain>
    </source>
</reference>
<keyword id="KW-0963">Cytoplasm</keyword>
<keyword id="KW-0255">Endonuclease</keyword>
<keyword id="KW-0378">Hydrolase</keyword>
<keyword id="KW-0479">Metal-binding</keyword>
<keyword id="KW-0540">Nuclease</keyword>
<keyword id="KW-0690">Ribosome biogenesis</keyword>
<keyword id="KW-0698">rRNA processing</keyword>
<keyword id="KW-0862">Zinc</keyword>